<comment type="function">
    <text evidence="1">Catalyzes the condensation reaction of fatty acid synthesis by the addition to an acyl acceptor of two carbons from malonyl-ACP. Catalyzes the first condensation reaction which initiates fatty acid synthesis and may therefore play a role in governing the total rate of fatty acid production. Possesses both acetoacetyl-ACP synthase and acetyl transacylase activities. Its substrate specificity determines the biosynthesis of branched-chain and/or straight-chain of fatty acids.</text>
</comment>
<comment type="catalytic activity">
    <reaction evidence="1">
        <text>malonyl-[ACP] + acetyl-CoA + H(+) = 3-oxobutanoyl-[ACP] + CO2 + CoA</text>
        <dbReference type="Rhea" id="RHEA:12080"/>
        <dbReference type="Rhea" id="RHEA-COMP:9623"/>
        <dbReference type="Rhea" id="RHEA-COMP:9625"/>
        <dbReference type="ChEBI" id="CHEBI:15378"/>
        <dbReference type="ChEBI" id="CHEBI:16526"/>
        <dbReference type="ChEBI" id="CHEBI:57287"/>
        <dbReference type="ChEBI" id="CHEBI:57288"/>
        <dbReference type="ChEBI" id="CHEBI:78449"/>
        <dbReference type="ChEBI" id="CHEBI:78450"/>
        <dbReference type="EC" id="2.3.1.180"/>
    </reaction>
</comment>
<comment type="pathway">
    <text evidence="1">Lipid metabolism; fatty acid biosynthesis.</text>
</comment>
<comment type="subunit">
    <text evidence="1">Homodimer.</text>
</comment>
<comment type="subcellular location">
    <subcellularLocation>
        <location evidence="1">Cytoplasm</location>
    </subcellularLocation>
</comment>
<comment type="domain">
    <text evidence="1">The last Arg residue of the ACP-binding site is essential for the weak association between ACP/AcpP and FabH.</text>
</comment>
<comment type="similarity">
    <text evidence="1">Belongs to the thiolase-like superfamily. FabH family.</text>
</comment>
<evidence type="ECO:0000255" key="1">
    <source>
        <dbReference type="HAMAP-Rule" id="MF_01815"/>
    </source>
</evidence>
<reference key="1">
    <citation type="journal article" date="2001" name="Genome Res.">
        <title>The complete genome sequence of the lactic acid bacterium Lactococcus lactis ssp. lactis IL1403.</title>
        <authorList>
            <person name="Bolotin A."/>
            <person name="Wincker P."/>
            <person name="Mauger S."/>
            <person name="Jaillon O."/>
            <person name="Malarme K."/>
            <person name="Weissenbach J."/>
            <person name="Ehrlich S.D."/>
            <person name="Sorokin A."/>
        </authorList>
    </citation>
    <scope>NUCLEOTIDE SEQUENCE [LARGE SCALE GENOMIC DNA]</scope>
    <source>
        <strain>IL1403</strain>
    </source>
</reference>
<feature type="chain" id="PRO_0000110436" description="Beta-ketoacyl-[acyl-carrier-protein] synthase III">
    <location>
        <begin position="1"/>
        <end position="325"/>
    </location>
</feature>
<feature type="region of interest" description="ACP-binding" evidence="1">
    <location>
        <begin position="251"/>
        <end position="255"/>
    </location>
</feature>
<feature type="active site" evidence="1">
    <location>
        <position position="112"/>
    </location>
</feature>
<feature type="active site" evidence="1">
    <location>
        <position position="250"/>
    </location>
</feature>
<feature type="active site" evidence="1">
    <location>
        <position position="280"/>
    </location>
</feature>
<gene>
    <name evidence="1" type="primary">fabH</name>
    <name type="ordered locus">LL0771</name>
    <name type="ORF">L0182</name>
</gene>
<protein>
    <recommendedName>
        <fullName evidence="1">Beta-ketoacyl-[acyl-carrier-protein] synthase III</fullName>
        <shortName evidence="1">Beta-ketoacyl-ACP synthase III</shortName>
        <shortName evidence="1">KAS III</shortName>
        <ecNumber evidence="1">2.3.1.180</ecNumber>
    </recommendedName>
    <alternativeName>
        <fullName evidence="1">3-oxoacyl-[acyl-carrier-protein] synthase 3</fullName>
    </alternativeName>
    <alternativeName>
        <fullName evidence="1">3-oxoacyl-[acyl-carrier-protein] synthase III</fullName>
    </alternativeName>
</protein>
<accession>Q9CHG0</accession>
<organism>
    <name type="scientific">Lactococcus lactis subsp. lactis (strain IL1403)</name>
    <name type="common">Streptococcus lactis</name>
    <dbReference type="NCBI Taxonomy" id="272623"/>
    <lineage>
        <taxon>Bacteria</taxon>
        <taxon>Bacillati</taxon>
        <taxon>Bacillota</taxon>
        <taxon>Bacilli</taxon>
        <taxon>Lactobacillales</taxon>
        <taxon>Streptococcaceae</taxon>
        <taxon>Lactococcus</taxon>
    </lineage>
</organism>
<keyword id="KW-0012">Acyltransferase</keyword>
<keyword id="KW-0963">Cytoplasm</keyword>
<keyword id="KW-0275">Fatty acid biosynthesis</keyword>
<keyword id="KW-0276">Fatty acid metabolism</keyword>
<keyword id="KW-0444">Lipid biosynthesis</keyword>
<keyword id="KW-0443">Lipid metabolism</keyword>
<keyword id="KW-0511">Multifunctional enzyme</keyword>
<keyword id="KW-1185">Reference proteome</keyword>
<keyword id="KW-0808">Transferase</keyword>
<proteinExistence type="inferred from homology"/>
<sequence length="325" mass="34843">MTFAKITQVAHYVPENVVSNDDLSKIMDTNDEWIYSRTGIKNRHISTGENTSDLAAKVAKQLISDSNLSPETIDFIIVATVTPDSLMPSTAARVQAQVGAVNAFAYDLTAACSGFVFALSTAEKLISSGAYQRGLVIGAEVFSKVIDWSDRSTAVLFGDGAAGVLIEAGASQPLIIAEKMQTDGSRGNSLLSSYADIQTPFASVSYESSNLSMEGRAIFDFAVRDVPKNIQATLEKANLSAEEVDYYLLHQANSRILDKMAKKLGVTRQKFLQNMQEYGNTSAASIPILLSESVKNGIFSLDGQTKVVLTGFGGGLTWGTAIINL</sequence>
<dbReference type="EC" id="2.3.1.180" evidence="1"/>
<dbReference type="EMBL" id="AE005176">
    <property type="protein sequence ID" value="AAK04869.1"/>
    <property type="molecule type" value="Genomic_DNA"/>
</dbReference>
<dbReference type="PIR" id="C86721">
    <property type="entry name" value="C86721"/>
</dbReference>
<dbReference type="RefSeq" id="NP_266927.1">
    <property type="nucleotide sequence ID" value="NC_002662.1"/>
</dbReference>
<dbReference type="RefSeq" id="WP_003132499.1">
    <property type="nucleotide sequence ID" value="NC_002662.1"/>
</dbReference>
<dbReference type="SMR" id="Q9CHG0"/>
<dbReference type="PaxDb" id="272623-L0182"/>
<dbReference type="EnsemblBacteria" id="AAK04869">
    <property type="protein sequence ID" value="AAK04869"/>
    <property type="gene ID" value="L0182"/>
</dbReference>
<dbReference type="KEGG" id="lla:L0182"/>
<dbReference type="PATRIC" id="fig|272623.7.peg.826"/>
<dbReference type="eggNOG" id="COG0332">
    <property type="taxonomic scope" value="Bacteria"/>
</dbReference>
<dbReference type="HOGENOM" id="CLU_039592_4_1_9"/>
<dbReference type="OrthoDB" id="9815506at2"/>
<dbReference type="BRENDA" id="2.3.1.180">
    <property type="organism ID" value="2903"/>
</dbReference>
<dbReference type="UniPathway" id="UPA00094"/>
<dbReference type="Proteomes" id="UP000002196">
    <property type="component" value="Chromosome"/>
</dbReference>
<dbReference type="GO" id="GO:0005737">
    <property type="term" value="C:cytoplasm"/>
    <property type="evidence" value="ECO:0007669"/>
    <property type="project" value="UniProtKB-SubCell"/>
</dbReference>
<dbReference type="GO" id="GO:0004315">
    <property type="term" value="F:3-oxoacyl-[acyl-carrier-protein] synthase activity"/>
    <property type="evidence" value="ECO:0007669"/>
    <property type="project" value="InterPro"/>
</dbReference>
<dbReference type="GO" id="GO:0033818">
    <property type="term" value="F:beta-ketoacyl-acyl-carrier-protein synthase III activity"/>
    <property type="evidence" value="ECO:0007669"/>
    <property type="project" value="UniProtKB-UniRule"/>
</dbReference>
<dbReference type="GO" id="GO:0006633">
    <property type="term" value="P:fatty acid biosynthetic process"/>
    <property type="evidence" value="ECO:0007669"/>
    <property type="project" value="UniProtKB-UniRule"/>
</dbReference>
<dbReference type="CDD" id="cd00830">
    <property type="entry name" value="KAS_III"/>
    <property type="match status" value="1"/>
</dbReference>
<dbReference type="FunFam" id="3.40.47.10:FF:000004">
    <property type="entry name" value="3-oxoacyl-[acyl-carrier-protein] synthase 3"/>
    <property type="match status" value="1"/>
</dbReference>
<dbReference type="Gene3D" id="3.40.47.10">
    <property type="match status" value="1"/>
</dbReference>
<dbReference type="HAMAP" id="MF_01815">
    <property type="entry name" value="FabH"/>
    <property type="match status" value="1"/>
</dbReference>
<dbReference type="InterPro" id="IPR013747">
    <property type="entry name" value="ACP_syn_III_C"/>
</dbReference>
<dbReference type="InterPro" id="IPR013751">
    <property type="entry name" value="ACP_syn_III_N"/>
</dbReference>
<dbReference type="InterPro" id="IPR004655">
    <property type="entry name" value="FabH"/>
</dbReference>
<dbReference type="InterPro" id="IPR016039">
    <property type="entry name" value="Thiolase-like"/>
</dbReference>
<dbReference type="NCBIfam" id="TIGR00747">
    <property type="entry name" value="fabH"/>
    <property type="match status" value="1"/>
</dbReference>
<dbReference type="NCBIfam" id="NF006829">
    <property type="entry name" value="PRK09352.1"/>
    <property type="match status" value="1"/>
</dbReference>
<dbReference type="PANTHER" id="PTHR43091">
    <property type="entry name" value="3-OXOACYL-[ACYL-CARRIER-PROTEIN] SYNTHASE"/>
    <property type="match status" value="1"/>
</dbReference>
<dbReference type="PANTHER" id="PTHR43091:SF1">
    <property type="entry name" value="BETA-KETOACYL-[ACYL-CARRIER-PROTEIN] SYNTHASE III, CHLOROPLASTIC"/>
    <property type="match status" value="1"/>
</dbReference>
<dbReference type="Pfam" id="PF08545">
    <property type="entry name" value="ACP_syn_III"/>
    <property type="match status" value="1"/>
</dbReference>
<dbReference type="Pfam" id="PF08541">
    <property type="entry name" value="ACP_syn_III_C"/>
    <property type="match status" value="1"/>
</dbReference>
<dbReference type="SUPFAM" id="SSF53901">
    <property type="entry name" value="Thiolase-like"/>
    <property type="match status" value="1"/>
</dbReference>
<name>FABH_LACLA</name>